<dbReference type="EC" id="6.3.5.-" evidence="1"/>
<dbReference type="EMBL" id="CM002242">
    <property type="protein sequence ID" value="EAA29736.1"/>
    <property type="molecule type" value="Genomic_DNA"/>
</dbReference>
<dbReference type="RefSeq" id="XP_958972.1">
    <property type="nucleotide sequence ID" value="XM_953879.2"/>
</dbReference>
<dbReference type="SMR" id="Q7S2V0"/>
<dbReference type="FunCoup" id="Q7S2V0">
    <property type="interactions" value="352"/>
</dbReference>
<dbReference type="STRING" id="367110.Q7S2V0"/>
<dbReference type="PaxDb" id="5141-EFNCRP00000008927"/>
<dbReference type="EnsemblFungi" id="EAA29736">
    <property type="protein sequence ID" value="EAA29736"/>
    <property type="gene ID" value="NCU09025"/>
</dbReference>
<dbReference type="GeneID" id="3875119"/>
<dbReference type="KEGG" id="ncr:NCU09025"/>
<dbReference type="VEuPathDB" id="FungiDB:NCU09025"/>
<dbReference type="HOGENOM" id="CLU_019240_4_1_1"/>
<dbReference type="InParanoid" id="Q7S2V0"/>
<dbReference type="OMA" id="ARKWWMG"/>
<dbReference type="OrthoDB" id="1722066at2759"/>
<dbReference type="Proteomes" id="UP000001805">
    <property type="component" value="Chromosome 7, Linkage Group VII"/>
</dbReference>
<dbReference type="GO" id="GO:0030956">
    <property type="term" value="C:glutamyl-tRNA(Gln) amidotransferase complex"/>
    <property type="evidence" value="ECO:0000318"/>
    <property type="project" value="GO_Central"/>
</dbReference>
<dbReference type="GO" id="GO:0005739">
    <property type="term" value="C:mitochondrion"/>
    <property type="evidence" value="ECO:0000318"/>
    <property type="project" value="GO_Central"/>
</dbReference>
<dbReference type="GO" id="GO:0005524">
    <property type="term" value="F:ATP binding"/>
    <property type="evidence" value="ECO:0007669"/>
    <property type="project" value="UniProtKB-KW"/>
</dbReference>
<dbReference type="GO" id="GO:0050567">
    <property type="term" value="F:glutaminyl-tRNA synthase (glutamine-hydrolyzing) activity"/>
    <property type="evidence" value="ECO:0000318"/>
    <property type="project" value="GO_Central"/>
</dbReference>
<dbReference type="GO" id="GO:0070681">
    <property type="term" value="P:glutaminyl-tRNAGln biosynthesis via transamidation"/>
    <property type="evidence" value="ECO:0000318"/>
    <property type="project" value="GO_Central"/>
</dbReference>
<dbReference type="GO" id="GO:0032543">
    <property type="term" value="P:mitochondrial translation"/>
    <property type="evidence" value="ECO:0000318"/>
    <property type="project" value="GO_Central"/>
</dbReference>
<dbReference type="HAMAP" id="MF_00121">
    <property type="entry name" value="GatB"/>
    <property type="match status" value="1"/>
</dbReference>
<dbReference type="InterPro" id="IPR017959">
    <property type="entry name" value="Asn/Gln-tRNA_amidoTrfase_suB/E"/>
</dbReference>
<dbReference type="InterPro" id="IPR006075">
    <property type="entry name" value="Asn/Gln-tRNA_Trfase_suB/E_cat"/>
</dbReference>
<dbReference type="InterPro" id="IPR018027">
    <property type="entry name" value="Asn/Gln_amidotransferase"/>
</dbReference>
<dbReference type="InterPro" id="IPR003789">
    <property type="entry name" value="Asn/Gln_tRNA_amidoTrase-B-like"/>
</dbReference>
<dbReference type="InterPro" id="IPR004413">
    <property type="entry name" value="GatB"/>
</dbReference>
<dbReference type="InterPro" id="IPR017958">
    <property type="entry name" value="Gln-tRNA_amidoTrfase_suB_CS"/>
</dbReference>
<dbReference type="InterPro" id="IPR014746">
    <property type="entry name" value="Gln_synth/guanido_kin_cat_dom"/>
</dbReference>
<dbReference type="NCBIfam" id="TIGR00133">
    <property type="entry name" value="gatB"/>
    <property type="match status" value="1"/>
</dbReference>
<dbReference type="NCBIfam" id="NF004012">
    <property type="entry name" value="PRK05477.1-2"/>
    <property type="match status" value="1"/>
</dbReference>
<dbReference type="PANTHER" id="PTHR11659">
    <property type="entry name" value="GLUTAMYL-TRNA GLN AMIDOTRANSFERASE SUBUNIT B MITOCHONDRIAL AND PROKARYOTIC PET112-RELATED"/>
    <property type="match status" value="1"/>
</dbReference>
<dbReference type="PANTHER" id="PTHR11659:SF0">
    <property type="entry name" value="GLUTAMYL-TRNA(GLN) AMIDOTRANSFERASE SUBUNIT B, MITOCHONDRIAL"/>
    <property type="match status" value="1"/>
</dbReference>
<dbReference type="Pfam" id="PF02934">
    <property type="entry name" value="GatB_N"/>
    <property type="match status" value="1"/>
</dbReference>
<dbReference type="SMART" id="SM00845">
    <property type="entry name" value="GatB_Yqey"/>
    <property type="match status" value="1"/>
</dbReference>
<dbReference type="SUPFAM" id="SSF89095">
    <property type="entry name" value="GatB/YqeY motif"/>
    <property type="match status" value="1"/>
</dbReference>
<dbReference type="SUPFAM" id="SSF55931">
    <property type="entry name" value="Glutamine synthetase/guanido kinase"/>
    <property type="match status" value="1"/>
</dbReference>
<dbReference type="PROSITE" id="PS01234">
    <property type="entry name" value="GATB"/>
    <property type="match status" value="1"/>
</dbReference>
<name>GATB_NEUCR</name>
<comment type="function">
    <text evidence="1">Allows the formation of correctly charged Gln-tRNA(Gln) through the transamidation of misacylated Glu-tRNA(Gln) in the mitochondria. The reaction takes place in the presence of glutamine and ATP through an activated gamma-phospho-Glu-tRNA(Gln).</text>
</comment>
<comment type="catalytic activity">
    <reaction evidence="1">
        <text>L-glutamyl-tRNA(Gln) + L-glutamine + ATP + H2O = L-glutaminyl-tRNA(Gln) + L-glutamate + ADP + phosphate + H(+)</text>
        <dbReference type="Rhea" id="RHEA:17521"/>
        <dbReference type="Rhea" id="RHEA-COMP:9681"/>
        <dbReference type="Rhea" id="RHEA-COMP:9684"/>
        <dbReference type="ChEBI" id="CHEBI:15377"/>
        <dbReference type="ChEBI" id="CHEBI:15378"/>
        <dbReference type="ChEBI" id="CHEBI:29985"/>
        <dbReference type="ChEBI" id="CHEBI:30616"/>
        <dbReference type="ChEBI" id="CHEBI:43474"/>
        <dbReference type="ChEBI" id="CHEBI:58359"/>
        <dbReference type="ChEBI" id="CHEBI:78520"/>
        <dbReference type="ChEBI" id="CHEBI:78521"/>
        <dbReference type="ChEBI" id="CHEBI:456216"/>
    </reaction>
</comment>
<comment type="subunit">
    <text evidence="1">Subunit of the heterotrimeric GatCAB amidotransferase (AdT) complex, composed of A, B and C subunits.</text>
</comment>
<comment type="subcellular location">
    <subcellularLocation>
        <location evidence="1">Mitochondrion</location>
    </subcellularLocation>
</comment>
<comment type="miscellaneous">
    <text evidence="1">This protein may be expected to contain an N-terminal transit peptide but none has been predicted.</text>
</comment>
<comment type="similarity">
    <text evidence="1">Belongs to the GatB/GatE family. GatB subfamily.</text>
</comment>
<keyword id="KW-0067">ATP-binding</keyword>
<keyword id="KW-0436">Ligase</keyword>
<keyword id="KW-0496">Mitochondrion</keyword>
<keyword id="KW-0547">Nucleotide-binding</keyword>
<keyword id="KW-0648">Protein biosynthesis</keyword>
<keyword id="KW-1185">Reference proteome</keyword>
<sequence length="647" mass="71055">MPRIPTVELSRYLLTGHIASPGCLRARAALPGKNTRVALGGAPLPSRQLQPRQHARYLTTETSFANPSATTSSPAAAAPFRKQLKEQAKALKKSGHKKKKSSDNQTVPGWELTVGIEIHAQLNTAHKLFSPATTSFNDPPNTHVAPFDLALPGSQPLFQPATLIPAVRAALALNCSIQPVSRFDRKHYFHWDQPSGYQITQFYEPFAKDGFITLYARDGIAAEDGEEIKVGIKQVQMEQDTAKTTAQPGDVQWLDFNRVGVPLIEIITLPEIHHPATAAALVRKVQMVLASVDACVSGLEEGGLRADVNVSVRRTDDPSGKLGTRTEIKNLSSFKAVEDAIIAERDRQIELLEEGGEVKGETRGWSLGSTETRRLRGKEGEVDYRYMPDPDLGPVVIGEDLVARLRETMGVLPDQEADQLMERYNLSAKDALSLMLLDGGARIQYFYNVLDSLEERLVADGQAVPEGAEHATLAANWCLHELGKLTDSASSSSCSDPDVLEGLAMTPLGESPLVPSSSLAAILHHLYSRTITAKVAKDLLWAVYRGEIPEGGTTSYIDTHGLWFKELPEEEYAKLADEVIQGEEKILGEFLRWKQGKMKAYPQGKLMFLVGKMMRGGPEGRVEASGAERVLRRRIEEVYLPELEKGE</sequence>
<reference key="1">
    <citation type="journal article" date="2003" name="Nature">
        <title>The genome sequence of the filamentous fungus Neurospora crassa.</title>
        <authorList>
            <person name="Galagan J.E."/>
            <person name="Calvo S.E."/>
            <person name="Borkovich K.A."/>
            <person name="Selker E.U."/>
            <person name="Read N.D."/>
            <person name="Jaffe D.B."/>
            <person name="FitzHugh W."/>
            <person name="Ma L.-J."/>
            <person name="Smirnov S."/>
            <person name="Purcell S."/>
            <person name="Rehman B."/>
            <person name="Elkins T."/>
            <person name="Engels R."/>
            <person name="Wang S."/>
            <person name="Nielsen C.B."/>
            <person name="Butler J."/>
            <person name="Endrizzi M."/>
            <person name="Qui D."/>
            <person name="Ianakiev P."/>
            <person name="Bell-Pedersen D."/>
            <person name="Nelson M.A."/>
            <person name="Werner-Washburne M."/>
            <person name="Selitrennikoff C.P."/>
            <person name="Kinsey J.A."/>
            <person name="Braun E.L."/>
            <person name="Zelter A."/>
            <person name="Schulte U."/>
            <person name="Kothe G.O."/>
            <person name="Jedd G."/>
            <person name="Mewes H.-W."/>
            <person name="Staben C."/>
            <person name="Marcotte E."/>
            <person name="Greenberg D."/>
            <person name="Roy A."/>
            <person name="Foley K."/>
            <person name="Naylor J."/>
            <person name="Stange-Thomann N."/>
            <person name="Barrett R."/>
            <person name="Gnerre S."/>
            <person name="Kamal M."/>
            <person name="Kamvysselis M."/>
            <person name="Mauceli E.W."/>
            <person name="Bielke C."/>
            <person name="Rudd S."/>
            <person name="Frishman D."/>
            <person name="Krystofova S."/>
            <person name="Rasmussen C."/>
            <person name="Metzenberg R.L."/>
            <person name="Perkins D.D."/>
            <person name="Kroken S."/>
            <person name="Cogoni C."/>
            <person name="Macino G."/>
            <person name="Catcheside D.E.A."/>
            <person name="Li W."/>
            <person name="Pratt R.J."/>
            <person name="Osmani S.A."/>
            <person name="DeSouza C.P.C."/>
            <person name="Glass N.L."/>
            <person name="Orbach M.J."/>
            <person name="Berglund J.A."/>
            <person name="Voelker R."/>
            <person name="Yarden O."/>
            <person name="Plamann M."/>
            <person name="Seiler S."/>
            <person name="Dunlap J.C."/>
            <person name="Radford A."/>
            <person name="Aramayo R."/>
            <person name="Natvig D.O."/>
            <person name="Alex L.A."/>
            <person name="Mannhaupt G."/>
            <person name="Ebbole D.J."/>
            <person name="Freitag M."/>
            <person name="Paulsen I."/>
            <person name="Sachs M.S."/>
            <person name="Lander E.S."/>
            <person name="Nusbaum C."/>
            <person name="Birren B.W."/>
        </authorList>
    </citation>
    <scope>NUCLEOTIDE SEQUENCE [LARGE SCALE GENOMIC DNA]</scope>
    <source>
        <strain>ATCC 24698 / 74-OR23-1A / CBS 708.71 / DSM 1257 / FGSC 987</strain>
    </source>
</reference>
<organism>
    <name type="scientific">Neurospora crassa (strain ATCC 24698 / 74-OR23-1A / CBS 708.71 / DSM 1257 / FGSC 987)</name>
    <dbReference type="NCBI Taxonomy" id="367110"/>
    <lineage>
        <taxon>Eukaryota</taxon>
        <taxon>Fungi</taxon>
        <taxon>Dikarya</taxon>
        <taxon>Ascomycota</taxon>
        <taxon>Pezizomycotina</taxon>
        <taxon>Sordariomycetes</taxon>
        <taxon>Sordariomycetidae</taxon>
        <taxon>Sordariales</taxon>
        <taxon>Sordariaceae</taxon>
        <taxon>Neurospora</taxon>
    </lineage>
</organism>
<feature type="chain" id="PRO_0000413265" description="Glutamyl-tRNA(Gln) amidotransferase subunit B, mitochondrial">
    <location>
        <begin position="1"/>
        <end position="647"/>
    </location>
</feature>
<feature type="region of interest" description="Disordered" evidence="2">
    <location>
        <begin position="87"/>
        <end position="106"/>
    </location>
</feature>
<feature type="compositionally biased region" description="Basic residues" evidence="2">
    <location>
        <begin position="90"/>
        <end position="100"/>
    </location>
</feature>
<gene>
    <name type="ORF">NCU09025</name>
</gene>
<accession>Q7S2V0</accession>
<proteinExistence type="inferred from homology"/>
<evidence type="ECO:0000255" key="1">
    <source>
        <dbReference type="HAMAP-Rule" id="MF_03147"/>
    </source>
</evidence>
<evidence type="ECO:0000256" key="2">
    <source>
        <dbReference type="SAM" id="MobiDB-lite"/>
    </source>
</evidence>
<protein>
    <recommendedName>
        <fullName evidence="1">Glutamyl-tRNA(Gln) amidotransferase subunit B, mitochondrial</fullName>
        <shortName evidence="1">Glu-AdT subunit B</shortName>
        <ecNumber evidence="1">6.3.5.-</ecNumber>
    </recommendedName>
</protein>